<name>SSTT_HISS1</name>
<evidence type="ECO:0000255" key="1">
    <source>
        <dbReference type="HAMAP-Rule" id="MF_01582"/>
    </source>
</evidence>
<dbReference type="EMBL" id="CP000436">
    <property type="protein sequence ID" value="ABI25366.1"/>
    <property type="molecule type" value="Genomic_DNA"/>
</dbReference>
<dbReference type="SMR" id="Q0I455"/>
<dbReference type="KEGG" id="hso:HS_1091"/>
<dbReference type="eggNOG" id="COG3633">
    <property type="taxonomic scope" value="Bacteria"/>
</dbReference>
<dbReference type="HOGENOM" id="CLU_044581_0_0_6"/>
<dbReference type="GO" id="GO:0005886">
    <property type="term" value="C:plasma membrane"/>
    <property type="evidence" value="ECO:0007669"/>
    <property type="project" value="UniProtKB-SubCell"/>
</dbReference>
<dbReference type="GO" id="GO:0005295">
    <property type="term" value="F:neutral L-amino acid:sodium symporter activity"/>
    <property type="evidence" value="ECO:0007669"/>
    <property type="project" value="TreeGrafter"/>
</dbReference>
<dbReference type="GO" id="GO:0032329">
    <property type="term" value="P:serine transport"/>
    <property type="evidence" value="ECO:0007669"/>
    <property type="project" value="InterPro"/>
</dbReference>
<dbReference type="GO" id="GO:0015826">
    <property type="term" value="P:threonine transport"/>
    <property type="evidence" value="ECO:0007669"/>
    <property type="project" value="InterPro"/>
</dbReference>
<dbReference type="FunFam" id="1.10.3860.10:FF:000003">
    <property type="entry name" value="Serine/threonine transporter sstT"/>
    <property type="match status" value="1"/>
</dbReference>
<dbReference type="Gene3D" id="1.10.3860.10">
    <property type="entry name" value="Sodium:dicarboxylate symporter"/>
    <property type="match status" value="1"/>
</dbReference>
<dbReference type="HAMAP" id="MF_01582">
    <property type="entry name" value="Ser_Thr_transp_SstT"/>
    <property type="match status" value="1"/>
</dbReference>
<dbReference type="InterPro" id="IPR001991">
    <property type="entry name" value="Na-dicarboxylate_symporter"/>
</dbReference>
<dbReference type="InterPro" id="IPR036458">
    <property type="entry name" value="Na:dicarbo_symporter_sf"/>
</dbReference>
<dbReference type="InterPro" id="IPR023025">
    <property type="entry name" value="Ser_Thr_transp_SstT"/>
</dbReference>
<dbReference type="NCBIfam" id="NF010151">
    <property type="entry name" value="PRK13628.1"/>
    <property type="match status" value="1"/>
</dbReference>
<dbReference type="PANTHER" id="PTHR42865">
    <property type="entry name" value="PROTON/GLUTAMATE-ASPARTATE SYMPORTER"/>
    <property type="match status" value="1"/>
</dbReference>
<dbReference type="PANTHER" id="PTHR42865:SF8">
    <property type="entry name" value="SERINE_THREONINE TRANSPORTER SSTT"/>
    <property type="match status" value="1"/>
</dbReference>
<dbReference type="Pfam" id="PF00375">
    <property type="entry name" value="SDF"/>
    <property type="match status" value="1"/>
</dbReference>
<dbReference type="PRINTS" id="PR00173">
    <property type="entry name" value="EDTRNSPORT"/>
</dbReference>
<dbReference type="SUPFAM" id="SSF118215">
    <property type="entry name" value="Proton glutamate symport protein"/>
    <property type="match status" value="1"/>
</dbReference>
<protein>
    <recommendedName>
        <fullName evidence="1">Serine/threonine transporter SstT</fullName>
    </recommendedName>
    <alternativeName>
        <fullName evidence="1">Na(+)/serine-threonine symporter</fullName>
    </alternativeName>
</protein>
<proteinExistence type="inferred from homology"/>
<accession>Q0I455</accession>
<reference key="1">
    <citation type="journal article" date="2007" name="J. Bacteriol.">
        <title>Complete genome sequence of Haemophilus somnus (Histophilus somni) strain 129Pt and comparison to Haemophilus ducreyi 35000HP and Haemophilus influenzae Rd.</title>
        <authorList>
            <person name="Challacombe J.F."/>
            <person name="Duncan A.J."/>
            <person name="Brettin T.S."/>
            <person name="Bruce D."/>
            <person name="Chertkov O."/>
            <person name="Detter J.C."/>
            <person name="Han C.S."/>
            <person name="Misra M."/>
            <person name="Richardson P."/>
            <person name="Tapia R."/>
            <person name="Thayer N."/>
            <person name="Xie G."/>
            <person name="Inzana T.J."/>
        </authorList>
    </citation>
    <scope>NUCLEOTIDE SEQUENCE [LARGE SCALE GENOMIC DNA]</scope>
    <source>
        <strain>129Pt</strain>
    </source>
</reference>
<keyword id="KW-0029">Amino-acid transport</keyword>
<keyword id="KW-0997">Cell inner membrane</keyword>
<keyword id="KW-1003">Cell membrane</keyword>
<keyword id="KW-0472">Membrane</keyword>
<keyword id="KW-0769">Symport</keyword>
<keyword id="KW-0812">Transmembrane</keyword>
<keyword id="KW-1133">Transmembrane helix</keyword>
<keyword id="KW-0813">Transport</keyword>
<gene>
    <name evidence="1" type="primary">sstT</name>
    <name type="ordered locus">HS_1091</name>
</gene>
<feature type="chain" id="PRO_0000309095" description="Serine/threonine transporter SstT">
    <location>
        <begin position="1"/>
        <end position="413"/>
    </location>
</feature>
<feature type="transmembrane region" description="Helical" evidence="1">
    <location>
        <begin position="22"/>
        <end position="42"/>
    </location>
</feature>
<feature type="transmembrane region" description="Helical" evidence="1">
    <location>
        <begin position="61"/>
        <end position="81"/>
    </location>
</feature>
<feature type="transmembrane region" description="Helical" evidence="1">
    <location>
        <begin position="89"/>
        <end position="109"/>
    </location>
</feature>
<feature type="transmembrane region" description="Helical" evidence="1">
    <location>
        <begin position="148"/>
        <end position="168"/>
    </location>
</feature>
<feature type="transmembrane region" description="Helical" evidence="1">
    <location>
        <begin position="189"/>
        <end position="209"/>
    </location>
</feature>
<feature type="transmembrane region" description="Helical" evidence="1">
    <location>
        <begin position="224"/>
        <end position="244"/>
    </location>
</feature>
<feature type="transmembrane region" description="Helical" evidence="1">
    <location>
        <begin position="305"/>
        <end position="325"/>
    </location>
</feature>
<feature type="transmembrane region" description="Helical" evidence="1">
    <location>
        <begin position="337"/>
        <end position="357"/>
    </location>
</feature>
<feature type="transmembrane region" description="Helical" evidence="1">
    <location>
        <begin position="363"/>
        <end position="383"/>
    </location>
</feature>
<organism>
    <name type="scientific">Histophilus somni (strain 129Pt)</name>
    <name type="common">Haemophilus somnus</name>
    <dbReference type="NCBI Taxonomy" id="205914"/>
    <lineage>
        <taxon>Bacteria</taxon>
        <taxon>Pseudomonadati</taxon>
        <taxon>Pseudomonadota</taxon>
        <taxon>Gammaproteobacteria</taxon>
        <taxon>Pasteurellales</taxon>
        <taxon>Pasteurellaceae</taxon>
        <taxon>Histophilus</taxon>
    </lineage>
</organism>
<comment type="function">
    <text evidence="1">Involved in the import of serine and threonine into the cell, with the concomitant import of sodium (symport system).</text>
</comment>
<comment type="catalytic activity">
    <reaction evidence="1">
        <text>L-serine(in) + Na(+)(in) = L-serine(out) + Na(+)(out)</text>
        <dbReference type="Rhea" id="RHEA:29575"/>
        <dbReference type="ChEBI" id="CHEBI:29101"/>
        <dbReference type="ChEBI" id="CHEBI:33384"/>
    </reaction>
    <physiologicalReaction direction="right-to-left" evidence="1">
        <dbReference type="Rhea" id="RHEA:29577"/>
    </physiologicalReaction>
</comment>
<comment type="catalytic activity">
    <reaction evidence="1">
        <text>L-threonine(in) + Na(+)(in) = L-threonine(out) + Na(+)(out)</text>
        <dbReference type="Rhea" id="RHEA:69999"/>
        <dbReference type="ChEBI" id="CHEBI:29101"/>
        <dbReference type="ChEBI" id="CHEBI:57926"/>
    </reaction>
    <physiologicalReaction direction="right-to-left" evidence="1">
        <dbReference type="Rhea" id="RHEA:70001"/>
    </physiologicalReaction>
</comment>
<comment type="subcellular location">
    <subcellularLocation>
        <location evidence="1">Cell inner membrane</location>
        <topology evidence="1">Multi-pass membrane protein</topology>
    </subcellularLocation>
</comment>
<comment type="similarity">
    <text evidence="1">Belongs to the dicarboxylate/amino acid:cation symporter (DAACS) (TC 2.A.23) family.</text>
</comment>
<sequence length="413" mass="43881">MNKSYLYSFFFHGSLVKRISVGLLLGLLLALIAPSLQGVLGFNLAEKAGFLGKIFVRSLRAVAPILVFLLVISAIANKQLGTKSNMKSIVVLYLLGTFLAALTSVLFSFALPTEIALKTQEGSLSPPNEVSEVLSTLVLNVVDNPINALFNANFIGILFWAIGLGIALRYASDTTKNVMNDFSEAVSRIVHFIISFAPIGVFGLVAETLTDKGLGALLDYMQLLVVLIGSMLFTAFVINPILVFWKIRRNPYPLVWTCVRESGLTAFLTRSSAANIPVNMELSKRLKLDEETYSVSIPLGANINMAGAAITITVLTLAAVHTLGIEVSFPTAVLLSVVASICACGASGVAGGSLLLIPLACSLFGIPNDIAAQVIGVGFVIGVLQDSTETALNSSTDVIFTAAVCWSEENKNS</sequence>